<proteinExistence type="inferred from homology"/>
<organism>
    <name type="scientific">Pseudomonas fluorescens (strain Pf0-1)</name>
    <dbReference type="NCBI Taxonomy" id="205922"/>
    <lineage>
        <taxon>Bacteria</taxon>
        <taxon>Pseudomonadati</taxon>
        <taxon>Pseudomonadota</taxon>
        <taxon>Gammaproteobacteria</taxon>
        <taxon>Pseudomonadales</taxon>
        <taxon>Pseudomonadaceae</taxon>
        <taxon>Pseudomonas</taxon>
    </lineage>
</organism>
<protein>
    <recommendedName>
        <fullName evidence="1">Protoheme IX farnesyltransferase 2</fullName>
        <ecNumber evidence="1">2.5.1.141</ecNumber>
    </recommendedName>
    <alternativeName>
        <fullName evidence="1">Heme B farnesyltransferase 2</fullName>
    </alternativeName>
    <alternativeName>
        <fullName evidence="1">Heme O synthase 2</fullName>
    </alternativeName>
</protein>
<sequence>MSLKHFIQITKPGIIFGNVLSVAGGFFLASKGHVDLAVFLAAMIGTSLVVASGCVFNNCIDRDIDLKMERTKNRVLVQGLISLKLALVYATVLGVAGVALLYKVANPLAALFAVIGFIIYVGFYSLYLKRKSVHGTLVGSLSGAMPPVIGYVAVTNSFDMAALTLLVMFSLWQMPHSYAIAIFRFNDYLAASIPVLPVKRGIQVAKKHILIYILAFLVATLMLTFSGYAGMSYLAVAAAMGMYWLYMAWTGYKAVDDTVWARKLFVFSIFTITALSVMMSLDFKVPTELLLTYAP</sequence>
<reference key="1">
    <citation type="journal article" date="2009" name="Genome Biol.">
        <title>Genomic and genetic analyses of diversity and plant interactions of Pseudomonas fluorescens.</title>
        <authorList>
            <person name="Silby M.W."/>
            <person name="Cerdeno-Tarraga A.M."/>
            <person name="Vernikos G.S."/>
            <person name="Giddens S.R."/>
            <person name="Jackson R.W."/>
            <person name="Preston G.M."/>
            <person name="Zhang X.-X."/>
            <person name="Moon C.D."/>
            <person name="Gehrig S.M."/>
            <person name="Godfrey S.A.C."/>
            <person name="Knight C.G."/>
            <person name="Malone J.G."/>
            <person name="Robinson Z."/>
            <person name="Spiers A.J."/>
            <person name="Harris S."/>
            <person name="Challis G.L."/>
            <person name="Yaxley A.M."/>
            <person name="Harris D."/>
            <person name="Seeger K."/>
            <person name="Murphy L."/>
            <person name="Rutter S."/>
            <person name="Squares R."/>
            <person name="Quail M.A."/>
            <person name="Saunders E."/>
            <person name="Mavromatis K."/>
            <person name="Brettin T.S."/>
            <person name="Bentley S.D."/>
            <person name="Hothersall J."/>
            <person name="Stephens E."/>
            <person name="Thomas C.M."/>
            <person name="Parkhill J."/>
            <person name="Levy S.B."/>
            <person name="Rainey P.B."/>
            <person name="Thomson N.R."/>
        </authorList>
    </citation>
    <scope>NUCLEOTIDE SEQUENCE [LARGE SCALE GENOMIC DNA]</scope>
    <source>
        <strain>Pf0-1</strain>
    </source>
</reference>
<dbReference type="EC" id="2.5.1.141" evidence="1"/>
<dbReference type="EMBL" id="CP000094">
    <property type="protein sequence ID" value="ABA76381.1"/>
    <property type="molecule type" value="Genomic_DNA"/>
</dbReference>
<dbReference type="SMR" id="Q3K773"/>
<dbReference type="KEGG" id="pfo:Pfl01_4644"/>
<dbReference type="eggNOG" id="COG0109">
    <property type="taxonomic scope" value="Bacteria"/>
</dbReference>
<dbReference type="HOGENOM" id="CLU_029631_0_0_6"/>
<dbReference type="UniPathway" id="UPA00834">
    <property type="reaction ID" value="UER00712"/>
</dbReference>
<dbReference type="Proteomes" id="UP000002704">
    <property type="component" value="Chromosome"/>
</dbReference>
<dbReference type="GO" id="GO:0005886">
    <property type="term" value="C:plasma membrane"/>
    <property type="evidence" value="ECO:0007669"/>
    <property type="project" value="UniProtKB-SubCell"/>
</dbReference>
<dbReference type="GO" id="GO:0008495">
    <property type="term" value="F:protoheme IX farnesyltransferase activity"/>
    <property type="evidence" value="ECO:0007669"/>
    <property type="project" value="UniProtKB-UniRule"/>
</dbReference>
<dbReference type="GO" id="GO:0048034">
    <property type="term" value="P:heme O biosynthetic process"/>
    <property type="evidence" value="ECO:0007669"/>
    <property type="project" value="UniProtKB-UniRule"/>
</dbReference>
<dbReference type="CDD" id="cd13957">
    <property type="entry name" value="PT_UbiA_Cox10"/>
    <property type="match status" value="1"/>
</dbReference>
<dbReference type="FunFam" id="1.10.357.140:FF:000001">
    <property type="entry name" value="Protoheme IX farnesyltransferase"/>
    <property type="match status" value="1"/>
</dbReference>
<dbReference type="Gene3D" id="1.10.357.140">
    <property type="entry name" value="UbiA prenyltransferase"/>
    <property type="match status" value="1"/>
</dbReference>
<dbReference type="HAMAP" id="MF_00154">
    <property type="entry name" value="CyoE_CtaB"/>
    <property type="match status" value="1"/>
</dbReference>
<dbReference type="InterPro" id="IPR006369">
    <property type="entry name" value="Protohaem_IX_farnesylTrfase"/>
</dbReference>
<dbReference type="InterPro" id="IPR000537">
    <property type="entry name" value="UbiA_prenyltransferase"/>
</dbReference>
<dbReference type="InterPro" id="IPR030470">
    <property type="entry name" value="UbiA_prenylTrfase_CS"/>
</dbReference>
<dbReference type="InterPro" id="IPR044878">
    <property type="entry name" value="UbiA_sf"/>
</dbReference>
<dbReference type="NCBIfam" id="TIGR01473">
    <property type="entry name" value="cyoE_ctaB"/>
    <property type="match status" value="1"/>
</dbReference>
<dbReference type="NCBIfam" id="NF003348">
    <property type="entry name" value="PRK04375.1-1"/>
    <property type="match status" value="1"/>
</dbReference>
<dbReference type="PANTHER" id="PTHR43448">
    <property type="entry name" value="PROTOHEME IX FARNESYLTRANSFERASE, MITOCHONDRIAL"/>
    <property type="match status" value="1"/>
</dbReference>
<dbReference type="PANTHER" id="PTHR43448:SF2">
    <property type="entry name" value="PROTOHEME IX FARNESYLTRANSFERASE, MITOCHONDRIAL"/>
    <property type="match status" value="1"/>
</dbReference>
<dbReference type="Pfam" id="PF01040">
    <property type="entry name" value="UbiA"/>
    <property type="match status" value="1"/>
</dbReference>
<dbReference type="PROSITE" id="PS00943">
    <property type="entry name" value="UBIA"/>
    <property type="match status" value="1"/>
</dbReference>
<comment type="function">
    <text evidence="1">Converts heme B (protoheme IX) to heme O by substitution of the vinyl group on carbon 2 of heme B porphyrin ring with a hydroxyethyl farnesyl side group.</text>
</comment>
<comment type="catalytic activity">
    <reaction evidence="1">
        <text>heme b + (2E,6E)-farnesyl diphosphate + H2O = Fe(II)-heme o + diphosphate</text>
        <dbReference type="Rhea" id="RHEA:28070"/>
        <dbReference type="ChEBI" id="CHEBI:15377"/>
        <dbReference type="ChEBI" id="CHEBI:33019"/>
        <dbReference type="ChEBI" id="CHEBI:60344"/>
        <dbReference type="ChEBI" id="CHEBI:60530"/>
        <dbReference type="ChEBI" id="CHEBI:175763"/>
        <dbReference type="EC" id="2.5.1.141"/>
    </reaction>
</comment>
<comment type="pathway">
    <text evidence="1">Porphyrin-containing compound metabolism; heme O biosynthesis; heme O from protoheme: step 1/1.</text>
</comment>
<comment type="subcellular location">
    <subcellularLocation>
        <location evidence="1">Cell inner membrane</location>
        <topology evidence="1">Multi-pass membrane protein</topology>
    </subcellularLocation>
</comment>
<comment type="miscellaneous">
    <text evidence="1">Carbon 2 of the heme B porphyrin ring is defined according to the Fischer nomenclature.</text>
</comment>
<comment type="similarity">
    <text evidence="1">Belongs to the UbiA prenyltransferase family. Protoheme IX farnesyltransferase subfamily.</text>
</comment>
<keyword id="KW-0997">Cell inner membrane</keyword>
<keyword id="KW-1003">Cell membrane</keyword>
<keyword id="KW-0350">Heme biosynthesis</keyword>
<keyword id="KW-0472">Membrane</keyword>
<keyword id="KW-0808">Transferase</keyword>
<keyword id="KW-0812">Transmembrane</keyword>
<keyword id="KW-1133">Transmembrane helix</keyword>
<accession>Q3K773</accession>
<gene>
    <name evidence="1" type="primary">cyoE2</name>
    <name type="ordered locus">Pfl01_4644</name>
</gene>
<name>CYOE2_PSEPF</name>
<feature type="chain" id="PRO_0000326926" description="Protoheme IX farnesyltransferase 2">
    <location>
        <begin position="1"/>
        <end position="295"/>
    </location>
</feature>
<feature type="transmembrane region" description="Helical" evidence="1">
    <location>
        <begin position="9"/>
        <end position="29"/>
    </location>
</feature>
<feature type="transmembrane region" description="Helical" evidence="1">
    <location>
        <begin position="36"/>
        <end position="56"/>
    </location>
</feature>
<feature type="transmembrane region" description="Helical" evidence="1">
    <location>
        <begin position="80"/>
        <end position="100"/>
    </location>
</feature>
<feature type="transmembrane region" description="Helical" evidence="1">
    <location>
        <begin position="108"/>
        <end position="128"/>
    </location>
</feature>
<feature type="transmembrane region" description="Helical" evidence="1">
    <location>
        <begin position="135"/>
        <end position="155"/>
    </location>
</feature>
<feature type="transmembrane region" description="Helical" evidence="1">
    <location>
        <begin position="163"/>
        <end position="183"/>
    </location>
</feature>
<feature type="transmembrane region" description="Helical" evidence="1">
    <location>
        <begin position="209"/>
        <end position="229"/>
    </location>
</feature>
<feature type="transmembrane region" description="Helical" evidence="1">
    <location>
        <begin position="230"/>
        <end position="250"/>
    </location>
</feature>
<feature type="transmembrane region" description="Helical" evidence="1">
    <location>
        <begin position="265"/>
        <end position="285"/>
    </location>
</feature>
<evidence type="ECO:0000255" key="1">
    <source>
        <dbReference type="HAMAP-Rule" id="MF_00154"/>
    </source>
</evidence>